<accession>A0A1B0GV85</accession>
<keyword id="KW-0472">Membrane</keyword>
<keyword id="KW-1185">Reference proteome</keyword>
<keyword id="KW-0732">Signal</keyword>
<keyword id="KW-0812">Transmembrane</keyword>
<keyword id="KW-1133">Transmembrane helix</keyword>
<evidence type="ECO:0000255" key="1"/>
<evidence type="ECO:0000255" key="2">
    <source>
        <dbReference type="PROSITE-ProRule" id="PRU00363"/>
    </source>
</evidence>
<evidence type="ECO:0000256" key="3">
    <source>
        <dbReference type="SAM" id="MobiDB-lite"/>
    </source>
</evidence>
<evidence type="ECO:0000305" key="4"/>
<evidence type="ECO:0000312" key="5">
    <source>
        <dbReference type="HGNC" id="HGNC:53638"/>
    </source>
</evidence>
<proteinExistence type="evidence at transcript level"/>
<feature type="signal peptide" evidence="1">
    <location>
        <begin position="1"/>
        <end position="23"/>
    </location>
</feature>
<feature type="chain" id="PRO_5010648591" description="Reelin domain-containing protein 1" evidence="1">
    <location>
        <begin position="24"/>
        <end position="526"/>
    </location>
</feature>
<feature type="topological domain" description="Extracellular" evidence="4">
    <location>
        <begin position="24"/>
        <end position="443"/>
    </location>
</feature>
<feature type="transmembrane region" description="Helical" evidence="1">
    <location>
        <begin position="444"/>
        <end position="462"/>
    </location>
</feature>
<feature type="topological domain" description="Cytoplasmic" evidence="4">
    <location>
        <begin position="463"/>
        <end position="526"/>
    </location>
</feature>
<feature type="domain" description="Reelin" evidence="2">
    <location>
        <begin position="24"/>
        <end position="179"/>
    </location>
</feature>
<feature type="region of interest" description="Disordered" evidence="3">
    <location>
        <begin position="242"/>
        <end position="272"/>
    </location>
</feature>
<feature type="region of interest" description="Disordered" evidence="3">
    <location>
        <begin position="294"/>
        <end position="336"/>
    </location>
</feature>
<feature type="region of interest" description="Disordered" evidence="3">
    <location>
        <begin position="370"/>
        <end position="398"/>
    </location>
</feature>
<feature type="compositionally biased region" description="Polar residues" evidence="3">
    <location>
        <begin position="245"/>
        <end position="271"/>
    </location>
</feature>
<feature type="compositionally biased region" description="Polar residues" evidence="3">
    <location>
        <begin position="385"/>
        <end position="396"/>
    </location>
</feature>
<sequence>MRMQAALVGWACTTLCLASCSSAFSHGASTVACDDMQPKHIQAQPQHQDSHHITIHTHRTSYAPGDKIPVTVRSSRDFMGFLLQARRVSDHQIAGTFVLIPPHSKLMTCFQEADAVTHSDKSLKRNLSFVWKAPAQPVGDIKFLLSVVQSYFVYWARIESSVVSQQTHSSAHSDDRMEPRLLMPNLHQRLGDVEGAAPAPRTPITLPQQHTHVFAVALPGAAEEDNLDPVPASIWVTKFPGDAETLSQPSSHTATEGSINQQPSGDSNPTLEPSLEVHRLERLVALKRVSSESFASSLSTHHRTQDDPSFDSLETCLSSDGGEQDKTKASNRTVTQPPLSTVQLTYPQCLWSSETFTGNGVRASNPIPVLQTSGTSGLPAAGDQSEASRASASFLPQSKHKELRAGKGNGEGGVGYPRQTNPRPDIGLEGAQAPLGIQLRTPQLGILLCLSATLGMALAAGLRYLHTQYCHQQTEVSFSEPASDAVARSNSGETVHVRKIGENSFVLVQAEYNWITPSVGSKKTVL</sequence>
<dbReference type="EMBL" id="AC097372">
    <property type="status" value="NOT_ANNOTATED_CDS"/>
    <property type="molecule type" value="Genomic_DNA"/>
</dbReference>
<dbReference type="EMBL" id="CH471056">
    <property type="protein sequence ID" value="EAX05028.1"/>
    <property type="molecule type" value="Genomic_DNA"/>
</dbReference>
<dbReference type="EMBL" id="AV698927">
    <property type="status" value="NOT_ANNOTATED_CDS"/>
    <property type="molecule type" value="mRNA"/>
</dbReference>
<dbReference type="CCDS" id="CCDS87268.1"/>
<dbReference type="RefSeq" id="NP_001341560.1">
    <property type="nucleotide sequence ID" value="NM_001354631.1"/>
</dbReference>
<dbReference type="RefSeq" id="NP_001358000.1">
    <property type="nucleotide sequence ID" value="NM_001371071.1"/>
</dbReference>
<dbReference type="SMR" id="A0A1B0GV85"/>
<dbReference type="STRING" id="9606.ENSP00000490412"/>
<dbReference type="BioMuta" id="ENSG00000250673"/>
<dbReference type="MassIVE" id="A0A1B0GV85"/>
<dbReference type="Ensembl" id="ENST00000623665.2">
    <property type="protein sequence ID" value="ENSP00000510273.1"/>
    <property type="gene ID" value="ENSG00000250673.3"/>
</dbReference>
<dbReference type="Ensembl" id="ENST00000636502.1">
    <property type="protein sequence ID" value="ENSP00000490412.2"/>
    <property type="gene ID" value="ENSG00000250673.3"/>
</dbReference>
<dbReference type="GeneID" id="345051"/>
<dbReference type="MANE-Select" id="ENST00000623665.2">
    <property type="protein sequence ID" value="ENSP00000510273.1"/>
    <property type="RefSeq nucleotide sequence ID" value="NM_001354631.1"/>
    <property type="RefSeq protein sequence ID" value="NP_001341560.1"/>
</dbReference>
<dbReference type="AGR" id="HGNC:53638"/>
<dbReference type="GeneCards" id="REELD1"/>
<dbReference type="HGNC" id="HGNC:53638">
    <property type="gene designation" value="REELD1"/>
</dbReference>
<dbReference type="HPA" id="ENSG00000250673">
    <property type="expression patterns" value="Low tissue specificity"/>
</dbReference>
<dbReference type="neXtProt" id="NX_A0A1B0GV85"/>
<dbReference type="OpenTargets" id="ENSG00000250673"/>
<dbReference type="VEuPathDB" id="HostDB:ENSG00000250673"/>
<dbReference type="GeneTree" id="ENSGT00940000163277"/>
<dbReference type="InParanoid" id="A0A1B0GV85"/>
<dbReference type="OMA" id="DMQPKHI"/>
<dbReference type="OrthoDB" id="2419613at2759"/>
<dbReference type="PAN-GO" id="A0A1B0GV85">
    <property type="GO annotations" value="1 GO annotation based on evolutionary models"/>
</dbReference>
<dbReference type="Pharos" id="A0A1B0GV85">
    <property type="development level" value="Tdark"/>
</dbReference>
<dbReference type="PRO" id="PR:A0A1B0GV85"/>
<dbReference type="Proteomes" id="UP000005640">
    <property type="component" value="Chromosome 4"/>
</dbReference>
<dbReference type="RNAct" id="A0A1B0GV85">
    <property type="molecule type" value="protein"/>
</dbReference>
<dbReference type="Bgee" id="ENSG00000250673">
    <property type="expression patterns" value="Expressed in male germ line stem cell (sensu Vertebrata) in testis and 92 other cell types or tissues"/>
</dbReference>
<dbReference type="ExpressionAtlas" id="A0A1B0GV85">
    <property type="expression patterns" value="baseline and differential"/>
</dbReference>
<dbReference type="GO" id="GO:0016020">
    <property type="term" value="C:membrane"/>
    <property type="evidence" value="ECO:0000318"/>
    <property type="project" value="GO_Central"/>
</dbReference>
<dbReference type="CDD" id="cd08544">
    <property type="entry name" value="Reeler"/>
    <property type="match status" value="1"/>
</dbReference>
<dbReference type="Gene3D" id="2.60.40.4060">
    <property type="entry name" value="Reeler domain"/>
    <property type="match status" value="1"/>
</dbReference>
<dbReference type="InterPro" id="IPR051237">
    <property type="entry name" value="Ferric-chelate_Red/DefProt"/>
</dbReference>
<dbReference type="InterPro" id="IPR002861">
    <property type="entry name" value="Reeler_dom"/>
</dbReference>
<dbReference type="InterPro" id="IPR042307">
    <property type="entry name" value="Reeler_sf"/>
</dbReference>
<dbReference type="PANTHER" id="PTHR45828">
    <property type="entry name" value="CYTOCHROME B561/FERRIC REDUCTASE TRANSMEMBRANE"/>
    <property type="match status" value="1"/>
</dbReference>
<dbReference type="PANTHER" id="PTHR45828:SF51">
    <property type="entry name" value="REELIN DOMAIN-CONTAINING PROTEIN 1"/>
    <property type="match status" value="1"/>
</dbReference>
<dbReference type="Pfam" id="PF02014">
    <property type="entry name" value="Reeler"/>
    <property type="match status" value="1"/>
</dbReference>
<dbReference type="PROSITE" id="PS51019">
    <property type="entry name" value="REELIN"/>
    <property type="match status" value="1"/>
</dbReference>
<name>RELD1_HUMAN</name>
<reference key="1">
    <citation type="journal article" date="2005" name="Nature">
        <title>Generation and annotation of the DNA sequences of human chromosomes 2 and 4.</title>
        <authorList>
            <person name="Hillier L.W."/>
            <person name="Graves T.A."/>
            <person name="Fulton R.S."/>
            <person name="Fulton L.A."/>
            <person name="Pepin K.H."/>
            <person name="Minx P."/>
            <person name="Wagner-McPherson C."/>
            <person name="Layman D."/>
            <person name="Wylie K."/>
            <person name="Sekhon M."/>
            <person name="Becker M.C."/>
            <person name="Fewell G.A."/>
            <person name="Delehaunty K.D."/>
            <person name="Miner T.L."/>
            <person name="Nash W.E."/>
            <person name="Kremitzki C."/>
            <person name="Oddy L."/>
            <person name="Du H."/>
            <person name="Sun H."/>
            <person name="Bradshaw-Cordum H."/>
            <person name="Ali J."/>
            <person name="Carter J."/>
            <person name="Cordes M."/>
            <person name="Harris A."/>
            <person name="Isak A."/>
            <person name="van Brunt A."/>
            <person name="Nguyen C."/>
            <person name="Du F."/>
            <person name="Courtney L."/>
            <person name="Kalicki J."/>
            <person name="Ozersky P."/>
            <person name="Abbott S."/>
            <person name="Armstrong J."/>
            <person name="Belter E.A."/>
            <person name="Caruso L."/>
            <person name="Cedroni M."/>
            <person name="Cotton M."/>
            <person name="Davidson T."/>
            <person name="Desai A."/>
            <person name="Elliott G."/>
            <person name="Erb T."/>
            <person name="Fronick C."/>
            <person name="Gaige T."/>
            <person name="Haakenson W."/>
            <person name="Haglund K."/>
            <person name="Holmes A."/>
            <person name="Harkins R."/>
            <person name="Kim K."/>
            <person name="Kruchowski S.S."/>
            <person name="Strong C.M."/>
            <person name="Grewal N."/>
            <person name="Goyea E."/>
            <person name="Hou S."/>
            <person name="Levy A."/>
            <person name="Martinka S."/>
            <person name="Mead K."/>
            <person name="McLellan M.D."/>
            <person name="Meyer R."/>
            <person name="Randall-Maher J."/>
            <person name="Tomlinson C."/>
            <person name="Dauphin-Kohlberg S."/>
            <person name="Kozlowicz-Reilly A."/>
            <person name="Shah N."/>
            <person name="Swearengen-Shahid S."/>
            <person name="Snider J."/>
            <person name="Strong J.T."/>
            <person name="Thompson J."/>
            <person name="Yoakum M."/>
            <person name="Leonard S."/>
            <person name="Pearman C."/>
            <person name="Trani L."/>
            <person name="Radionenko M."/>
            <person name="Waligorski J.E."/>
            <person name="Wang C."/>
            <person name="Rock S.M."/>
            <person name="Tin-Wollam A.-M."/>
            <person name="Maupin R."/>
            <person name="Latreille P."/>
            <person name="Wendl M.C."/>
            <person name="Yang S.-P."/>
            <person name="Pohl C."/>
            <person name="Wallis J.W."/>
            <person name="Spieth J."/>
            <person name="Bieri T.A."/>
            <person name="Berkowicz N."/>
            <person name="Nelson J.O."/>
            <person name="Osborne J."/>
            <person name="Ding L."/>
            <person name="Meyer R."/>
            <person name="Sabo A."/>
            <person name="Shotland Y."/>
            <person name="Sinha P."/>
            <person name="Wohldmann P.E."/>
            <person name="Cook L.L."/>
            <person name="Hickenbotham M.T."/>
            <person name="Eldred J."/>
            <person name="Williams D."/>
            <person name="Jones T.A."/>
            <person name="She X."/>
            <person name="Ciccarelli F.D."/>
            <person name="Izaurralde E."/>
            <person name="Taylor J."/>
            <person name="Schmutz J."/>
            <person name="Myers R.M."/>
            <person name="Cox D.R."/>
            <person name="Huang X."/>
            <person name="McPherson J.D."/>
            <person name="Mardis E.R."/>
            <person name="Clifton S.W."/>
            <person name="Warren W.C."/>
            <person name="Chinwalla A.T."/>
            <person name="Eddy S.R."/>
            <person name="Marra M.A."/>
            <person name="Ovcharenko I."/>
            <person name="Furey T.S."/>
            <person name="Miller W."/>
            <person name="Eichler E.E."/>
            <person name="Bork P."/>
            <person name="Suyama M."/>
            <person name="Torrents D."/>
            <person name="Waterston R.H."/>
            <person name="Wilson R.K."/>
        </authorList>
    </citation>
    <scope>NUCLEOTIDE SEQUENCE [LARGE SCALE GENOMIC DNA]</scope>
</reference>
<reference key="2">
    <citation type="submission" date="2005-09" db="EMBL/GenBank/DDBJ databases">
        <authorList>
            <person name="Mural R.J."/>
            <person name="Istrail S."/>
            <person name="Sutton G."/>
            <person name="Florea L."/>
            <person name="Halpern A.L."/>
            <person name="Mobarry C.M."/>
            <person name="Lippert R."/>
            <person name="Walenz B."/>
            <person name="Shatkay H."/>
            <person name="Dew I."/>
            <person name="Miller J.R."/>
            <person name="Flanigan M.J."/>
            <person name="Edwards N.J."/>
            <person name="Bolanos R."/>
            <person name="Fasulo D."/>
            <person name="Halldorsson B.V."/>
            <person name="Hannenhalli S."/>
            <person name="Turner R."/>
            <person name="Yooseph S."/>
            <person name="Lu F."/>
            <person name="Nusskern D.R."/>
            <person name="Shue B.C."/>
            <person name="Zheng X.H."/>
            <person name="Zhong F."/>
            <person name="Delcher A.L."/>
            <person name="Huson D.H."/>
            <person name="Kravitz S.A."/>
            <person name="Mouchard L."/>
            <person name="Reinert K."/>
            <person name="Remington K.A."/>
            <person name="Clark A.G."/>
            <person name="Waterman M.S."/>
            <person name="Eichler E.E."/>
            <person name="Adams M.D."/>
            <person name="Hunkapiller M.W."/>
            <person name="Myers E.W."/>
            <person name="Venter J.C."/>
        </authorList>
    </citation>
    <scope>NUCLEOTIDE SEQUENCE [LARGE SCALE GENOMIC DNA]</scope>
</reference>
<reference key="3">
    <citation type="journal article" date="2001" name="Proc. Natl. Acad. Sci. U.S.A.">
        <title>Insight into hepatocellular carcinogenesis at transcriptome level by comparing gene expression profiles of hepatocellular carcinoma with those of corresponding noncancerous liver.</title>
        <authorList>
            <person name="Xu X.R."/>
            <person name="Huang J."/>
            <person name="Xu Z.G."/>
            <person name="Qian B.Z."/>
            <person name="Zhu Z.D."/>
            <person name="Yan Q."/>
            <person name="Cai T."/>
            <person name="Zhang X."/>
            <person name="Xiao H.S."/>
            <person name="Qu J."/>
            <person name="Liu F."/>
            <person name="Huang Q.H."/>
            <person name="Cheng Z.H."/>
            <person name="Li N.G."/>
            <person name="Du J.J."/>
            <person name="Hu W."/>
            <person name="Shen K.T."/>
            <person name="Lu G."/>
            <person name="Fu G."/>
            <person name="Zhong M."/>
            <person name="Xu S.H."/>
            <person name="Gu W.Y."/>
            <person name="Huang W."/>
            <person name="Zhao X.T."/>
            <person name="Hu G.X."/>
            <person name="Gu J.R."/>
            <person name="Chen Z."/>
            <person name="Han Z.G."/>
        </authorList>
    </citation>
    <scope>NUCLEOTIDE SEQUENCE [LARGE SCALE MRNA] OF 182-319</scope>
</reference>
<comment type="subcellular location">
    <subcellularLocation>
        <location evidence="1">Membrane</location>
        <topology evidence="1">Single-pass membrane protein</topology>
    </subcellularLocation>
</comment>
<protein>
    <recommendedName>
        <fullName evidence="4">Reelin domain-containing protein 1</fullName>
    </recommendedName>
</protein>
<organism>
    <name type="scientific">Homo sapiens</name>
    <name type="common">Human</name>
    <dbReference type="NCBI Taxonomy" id="9606"/>
    <lineage>
        <taxon>Eukaryota</taxon>
        <taxon>Metazoa</taxon>
        <taxon>Chordata</taxon>
        <taxon>Craniata</taxon>
        <taxon>Vertebrata</taxon>
        <taxon>Euteleostomi</taxon>
        <taxon>Mammalia</taxon>
        <taxon>Eutheria</taxon>
        <taxon>Euarchontoglires</taxon>
        <taxon>Primates</taxon>
        <taxon>Haplorrhini</taxon>
        <taxon>Catarrhini</taxon>
        <taxon>Hominidae</taxon>
        <taxon>Homo</taxon>
    </lineage>
</organism>
<gene>
    <name evidence="5" type="primary">REELD1</name>
</gene>